<keyword id="KW-0472">Membrane</keyword>
<keyword id="KW-0488">Methylation</keyword>
<keyword id="KW-1185">Reference proteome</keyword>
<keyword id="KW-0812">Transmembrane</keyword>
<keyword id="KW-1133">Transmembrane helix</keyword>
<accession>O67882</accession>
<sequence>MERKLSQRAGNTFKGFTLVEVLITLAIISLVFSLILISFQRATFFTFGAKKEAERLKSEALLFWELQRSLAGAKKLKINQGKELFLITSGGSLYRGVVKKGFIHKDGWLYLYEFPYPSGSIDFYEEEKLVKLAKLDDFKVFALDSLGKHENYEGLPPFVIVELNSKEFTFKVR</sequence>
<dbReference type="EMBL" id="AE000657">
    <property type="protein sequence ID" value="AAC07856.1"/>
    <property type="molecule type" value="Genomic_DNA"/>
</dbReference>
<dbReference type="PIR" id="F70481">
    <property type="entry name" value="F70481"/>
</dbReference>
<dbReference type="RefSeq" id="NP_214451.1">
    <property type="nucleotide sequence ID" value="NC_000918.1"/>
</dbReference>
<dbReference type="RefSeq" id="WP_010881387.1">
    <property type="nucleotide sequence ID" value="NC_000918.1"/>
</dbReference>
<dbReference type="SMR" id="O67882"/>
<dbReference type="STRING" id="224324.aq_2118"/>
<dbReference type="EnsemblBacteria" id="AAC07856">
    <property type="protein sequence ID" value="AAC07856"/>
    <property type="gene ID" value="aq_2118"/>
</dbReference>
<dbReference type="KEGG" id="aae:aq_2118"/>
<dbReference type="eggNOG" id="COG2165">
    <property type="taxonomic scope" value="Bacteria"/>
</dbReference>
<dbReference type="HOGENOM" id="CLU_1651362_0_0_0"/>
<dbReference type="InParanoid" id="O67882"/>
<dbReference type="OrthoDB" id="15360at2"/>
<dbReference type="Proteomes" id="UP000000798">
    <property type="component" value="Chromosome"/>
</dbReference>
<dbReference type="GO" id="GO:0016020">
    <property type="term" value="C:membrane"/>
    <property type="evidence" value="ECO:0007669"/>
    <property type="project" value="UniProtKB-SubCell"/>
</dbReference>
<dbReference type="InterPro" id="IPR012902">
    <property type="entry name" value="N_methyl_site"/>
</dbReference>
<dbReference type="InterPro" id="IPR045584">
    <property type="entry name" value="Pilin-like"/>
</dbReference>
<dbReference type="NCBIfam" id="TIGR02532">
    <property type="entry name" value="IV_pilin_GFxxxE"/>
    <property type="match status" value="1"/>
</dbReference>
<dbReference type="Pfam" id="PF07963">
    <property type="entry name" value="N_methyl"/>
    <property type="match status" value="1"/>
</dbReference>
<dbReference type="SUPFAM" id="SSF54523">
    <property type="entry name" value="Pili subunits"/>
    <property type="match status" value="1"/>
</dbReference>
<dbReference type="PROSITE" id="PS00409">
    <property type="entry name" value="PROKAR_NTER_METHYL"/>
    <property type="match status" value="1"/>
</dbReference>
<feature type="propeptide" id="PRO_0000431333" description="Leader sequence" evidence="2">
    <location>
        <begin position="1"/>
        <end position="15"/>
    </location>
</feature>
<feature type="chain" id="PRO_0000186971" description="Uncharacterized protein aq_2118">
    <location>
        <begin position="16"/>
        <end position="173"/>
    </location>
</feature>
<feature type="transmembrane region" description="Helical" evidence="3">
    <location>
        <begin position="16"/>
        <end position="37"/>
    </location>
</feature>
<feature type="modified residue" description="N-methylphenylalanine" evidence="2">
    <location>
        <position position="16"/>
    </location>
</feature>
<comment type="subcellular location">
    <subcellularLocation>
        <location evidence="1">Membrane</location>
        <topology evidence="1">Single-pass membrane protein</topology>
    </subcellularLocation>
</comment>
<reference key="1">
    <citation type="journal article" date="1998" name="Nature">
        <title>The complete genome of the hyperthermophilic bacterium Aquifex aeolicus.</title>
        <authorList>
            <person name="Deckert G."/>
            <person name="Warren P.V."/>
            <person name="Gaasterland T."/>
            <person name="Young W.G."/>
            <person name="Lenox A.L."/>
            <person name="Graham D.E."/>
            <person name="Overbeek R."/>
            <person name="Snead M.A."/>
            <person name="Keller M."/>
            <person name="Aujay M."/>
            <person name="Huber R."/>
            <person name="Feldman R.A."/>
            <person name="Short J.M."/>
            <person name="Olsen G.J."/>
            <person name="Swanson R.V."/>
        </authorList>
    </citation>
    <scope>NUCLEOTIDE SEQUENCE [LARGE SCALE GENOMIC DNA]</scope>
    <source>
        <strain>VF5</strain>
    </source>
</reference>
<evidence type="ECO:0000255" key="1"/>
<evidence type="ECO:0000255" key="2">
    <source>
        <dbReference type="PROSITE-ProRule" id="PRU01070"/>
    </source>
</evidence>
<evidence type="ECO:0000305" key="3"/>
<protein>
    <recommendedName>
        <fullName>Uncharacterized protein aq_2118</fullName>
    </recommendedName>
</protein>
<proteinExistence type="inferred from homology"/>
<organism>
    <name type="scientific">Aquifex aeolicus (strain VF5)</name>
    <dbReference type="NCBI Taxonomy" id="224324"/>
    <lineage>
        <taxon>Bacteria</taxon>
        <taxon>Pseudomonadati</taxon>
        <taxon>Aquificota</taxon>
        <taxon>Aquificia</taxon>
        <taxon>Aquificales</taxon>
        <taxon>Aquificaceae</taxon>
        <taxon>Aquifex</taxon>
    </lineage>
</organism>
<name>Y2118_AQUAE</name>
<gene>
    <name type="ordered locus">aq_2118</name>
</gene>